<reference key="1">
    <citation type="journal article" date="2006" name="Virology">
        <title>Phylogeny and evolution of old world arenaviruses.</title>
        <authorList>
            <person name="Emonet S."/>
            <person name="Lemasson J.J."/>
            <person name="Gonzalez J.P."/>
            <person name="de Lamballerie X."/>
            <person name="Charrel R.N."/>
        </authorList>
    </citation>
    <scope>NUCLEOTIDE SEQUENCE [GENOMIC RNA]</scope>
</reference>
<reference key="2">
    <citation type="journal article" date="2008" name="Curr. Opin. Microbiol.">
        <title>Phylogeny of the genus Arenavirus.</title>
        <authorList>
            <person name="Charrel R.N."/>
            <person name="de Lamballerie X."/>
            <person name="Emonet S."/>
        </authorList>
    </citation>
    <scope>NUCLEOTIDE SEQUENCE [GENOMIC RNA]</scope>
</reference>
<reference key="3">
    <citation type="journal article" date="2002" name="J. Virol.">
        <title>New World arenavirus clade C, but not clade A and B viruses, utilizes alpha-dystroglycan as its major receptor.</title>
        <authorList>
            <person name="Spiropoulou C.F."/>
            <person name="Kunz S."/>
            <person name="Rollin P.E."/>
            <person name="Campbell K.P."/>
            <person name="Oldstone M.B."/>
        </authorList>
    </citation>
    <scope>FUNCTION</scope>
    <scope>INTERACTION WITH HOST DAG1</scope>
</reference>
<accession>Q27YE4</accession>
<feature type="initiator methionine" description="Removed; by host" evidence="2">
    <location>
        <position position="1"/>
    </location>
</feature>
<feature type="chain" id="PRO_0000361592" description="Pre-glycoprotein polyprotein GP complex" evidence="2">
    <location>
        <begin position="2"/>
        <end position="495"/>
    </location>
</feature>
<feature type="chain" id="PRO_0000361593" description="Stable signal peptide" evidence="2">
    <location>
        <begin position="2"/>
        <end position="58"/>
    </location>
</feature>
<feature type="chain" id="PRO_0000361594" description="Glycoprotein G1" evidence="2">
    <location>
        <begin position="59"/>
        <end position="263"/>
    </location>
</feature>
<feature type="chain" id="PRO_0000361595" description="Glycoprotein G2" evidence="2">
    <location>
        <begin position="264"/>
        <end position="495"/>
    </location>
</feature>
<feature type="topological domain" description="Extracellular" evidence="2">
    <location>
        <begin position="2"/>
        <end position="17"/>
    </location>
</feature>
<feature type="transmembrane region" description="Helical" evidence="2">
    <location>
        <begin position="18"/>
        <end position="33"/>
    </location>
</feature>
<feature type="topological domain" description="Cytoplasmic" evidence="2">
    <location>
        <begin position="34"/>
        <end position="58"/>
    </location>
</feature>
<feature type="topological domain" description="Extracellular" evidence="2">
    <location>
        <begin position="59"/>
        <end position="436"/>
    </location>
</feature>
<feature type="transmembrane region" description="Helical" evidence="2">
    <location>
        <begin position="437"/>
        <end position="457"/>
    </location>
</feature>
<feature type="topological domain" description="Cytoplasmic" evidence="2">
    <location>
        <begin position="458"/>
        <end position="495"/>
    </location>
</feature>
<feature type="binding site" evidence="2">
    <location>
        <position position="57"/>
    </location>
    <ligand>
        <name>Zn(2+)</name>
        <dbReference type="ChEBI" id="CHEBI:29105"/>
        <label>1</label>
    </ligand>
</feature>
<feature type="binding site" evidence="2">
    <location>
        <position position="459"/>
    </location>
    <ligand>
        <name>Zn(2+)</name>
        <dbReference type="ChEBI" id="CHEBI:29105"/>
        <label>2</label>
    </ligand>
</feature>
<feature type="binding site" evidence="2">
    <location>
        <position position="461"/>
    </location>
    <ligand>
        <name>Zn(2+)</name>
        <dbReference type="ChEBI" id="CHEBI:29105"/>
        <label>2</label>
    </ligand>
</feature>
<feature type="binding site" evidence="2">
    <location>
        <position position="467"/>
    </location>
    <ligand>
        <name>Zn(2+)</name>
        <dbReference type="ChEBI" id="CHEBI:29105"/>
        <label>2</label>
    </ligand>
</feature>
<feature type="binding site" evidence="2">
    <location>
        <position position="471"/>
    </location>
    <ligand>
        <name>Zn(2+)</name>
        <dbReference type="ChEBI" id="CHEBI:29105"/>
        <label>1</label>
    </ligand>
</feature>
<feature type="binding site" evidence="2">
    <location>
        <position position="479"/>
    </location>
    <ligand>
        <name>Zn(2+)</name>
        <dbReference type="ChEBI" id="CHEBI:29105"/>
        <label>1</label>
    </ligand>
</feature>
<feature type="binding site" evidence="2">
    <location>
        <position position="481"/>
    </location>
    <ligand>
        <name>Zn(2+)</name>
        <dbReference type="ChEBI" id="CHEBI:29105"/>
        <label>1</label>
    </ligand>
</feature>
<feature type="site" description="Important for GP-C-mediated membrane fusion" evidence="1">
    <location>
        <position position="33"/>
    </location>
</feature>
<feature type="site" description="Cleavage; by host signal peptidase" evidence="2">
    <location>
        <begin position="58"/>
        <end position="59"/>
    </location>
</feature>
<feature type="site" description="Cleavage; by host MBTPS1" evidence="2">
    <location>
        <begin position="263"/>
        <end position="264"/>
    </location>
</feature>
<feature type="lipid moiety-binding region" description="N-myristoyl glycine; by host" evidence="2">
    <location>
        <position position="2"/>
    </location>
</feature>
<feature type="glycosylation site" description="N-linked (GlcNAc...) asparagine; by host" evidence="2">
    <location>
        <position position="78"/>
    </location>
</feature>
<feature type="glycosylation site" description="N-linked (GlcNAc...) asparagine; by host" evidence="2">
    <location>
        <position position="88"/>
    </location>
</feature>
<feature type="glycosylation site" description="N-linked (GlcNAc...) asparagine; by host" evidence="2">
    <location>
        <position position="107"/>
    </location>
</feature>
<feature type="glycosylation site" description="N-linked (GlcNAc...) asparagine; by host" evidence="2">
    <location>
        <position position="117"/>
    </location>
</feature>
<feature type="glycosylation site" description="N-linked (GlcNAc...) asparagine; by host" evidence="2">
    <location>
        <position position="165"/>
    </location>
</feature>
<feature type="glycosylation site" description="N-linked (GlcNAc...) asparagine; by host" evidence="2">
    <location>
        <position position="228"/>
    </location>
</feature>
<feature type="glycosylation site" description="N-linked (GlcNAc...) asparagine; by host" evidence="2">
    <location>
        <position position="369"/>
    </location>
</feature>
<feature type="glycosylation site" description="N-linked (GlcNAc...) asparagine; by host" evidence="2">
    <location>
        <position position="377"/>
    </location>
</feature>
<feature type="glycosylation site" description="N-linked (GlcNAc...) asparagine; by host" evidence="2">
    <location>
        <position position="394"/>
    </location>
</feature>
<feature type="glycosylation site" description="N-linked (GlcNAc...) asparagine; by host" evidence="2">
    <location>
        <position position="399"/>
    </location>
</feature>
<feature type="disulfide bond" evidence="2">
    <location>
        <begin position="85"/>
        <end position="235"/>
    </location>
</feature>
<feature type="disulfide bond" evidence="2">
    <location>
        <begin position="116"/>
        <end position="153"/>
    </location>
</feature>
<feature type="disulfide bond" evidence="2">
    <location>
        <begin position="178"/>
        <end position="216"/>
    </location>
</feature>
<feature type="disulfide bond" evidence="2">
    <location>
        <begin position="283"/>
        <end position="296"/>
    </location>
</feature>
<feature type="disulfide bond" evidence="2">
    <location>
        <begin position="305"/>
        <end position="314"/>
    </location>
</feature>
<feature type="disulfide bond" evidence="2">
    <location>
        <begin position="368"/>
        <end position="389"/>
    </location>
</feature>
<organism>
    <name type="scientific">Ippy mammarenavirus (isolate Rat/Central African Republic/Dak An B 188 d/1970)</name>
    <name type="common">IPPYV</name>
    <dbReference type="NCBI Taxonomy" id="3052308"/>
    <lineage>
        <taxon>Viruses</taxon>
        <taxon>Riboviria</taxon>
        <taxon>Orthornavirae</taxon>
        <taxon>Negarnaviricota</taxon>
        <taxon>Polyploviricotina</taxon>
        <taxon>Ellioviricetes</taxon>
        <taxon>Bunyavirales</taxon>
        <taxon>Arenaviridae</taxon>
        <taxon>Mammarenavirus</taxon>
    </lineage>
</organism>
<comment type="function">
    <molecule>Stable signal peptide</molecule>
    <text evidence="2">Functions as a cleaved signal peptide that is retained as the third component of the GP complex (GP-C). Helps to stabilize the spike complex in its native conformation. The SSP is required for efficient glycoprotein expression, post-translational maturation cleavage of G1 and G2, glycoprotein transport to the cell surface plasma membrane, formation of infectious virus particles, and acid pH-dependent glycoprotein-mediated cell fusion.</text>
</comment>
<comment type="function">
    <molecule>Glycoprotein G1</molecule>
    <text evidence="2 3">Forms the virion spikes together with glycoprotein G2. The glycoprotein spike trimers are connected to the underlying matrix. Mediates virus attachment to host receptor alpha-dystroglycan DAG1. This interaction leads to virion entry into the host cell through the endosomal pathway (PubMed:11967329).</text>
</comment>
<comment type="function">
    <molecule>Glycoprotein G2</molecule>
    <text evidence="2">Forms the virion spikes together with glycoprotein G1. The glycoprotein spike trimers are connected to the underlying matrix. Class I viral fusion protein that directs fusion of viral and host endosomal membranes, leading to delivery of the nucleocapsid into the cytoplasm. Membrane fusion is mediated by irreversible conformational changes induced by acidification.</text>
</comment>
<comment type="subunit">
    <molecule>Stable signal peptide</molecule>
    <text evidence="2">Interacts with glycoprotein G2. Part of the GP complex (GP-C) together with glycoprotein G1 and glycoprotein G2. The GP-complex interacts with protein Z, which interacts with ribonucleocapsid; these interactions may induce virion budding.</text>
</comment>
<comment type="subunit">
    <molecule>Glycoprotein G1</molecule>
    <text evidence="2">Homotrimer; disulfide-linked. In pre-fusion state, G1 homotrimers bind G2 homotrimers via ionic interactions. Part of the GP complex (GP-C) together with glycoprotein G2 and the stable signal peptide. The GP-complex interacts with protein Z, which interacts with ribonucleocapsid; these interactions may induce virion budding.</text>
</comment>
<comment type="subunit">
    <molecule>Glycoprotein G2</molecule>
    <text evidence="2">Homotrimer. Interacts with the stable signal peptide. In pre-fusion state, G2 homotrimers bind G1 homotrimers via ionic interactions. Part of the GP complex (GP-C) together with glycoprotein G1 and the stable signal peptide. Acidification in the endosome triggers rearrangements, which ultimately leads to a 6 helix bundle formed by the two heptad repeat domains (HR1 and HR2) in post-fusion state. The GP-complex interacts with protein Z, which interacts with ribonucleocapsid; these interactions may induce virion budding.</text>
</comment>
<comment type="subcellular location">
    <molecule>Stable signal peptide</molecule>
    <subcellularLocation>
        <location evidence="2">Virion membrane</location>
        <topology evidence="2">Single-pass type II membrane protein</topology>
    </subcellularLocation>
    <subcellularLocation>
        <location evidence="2">Host endoplasmic reticulum membrane</location>
        <topology evidence="2">Single-pass type II membrane protein</topology>
    </subcellularLocation>
    <subcellularLocation>
        <location evidence="2">Host Golgi apparatus membrane</location>
        <topology evidence="2">Single-pass type II membrane protein</topology>
    </subcellularLocation>
    <subcellularLocation>
        <location evidence="2">Host cell membrane</location>
        <topology evidence="2">Single-pass type II membrane protein</topology>
    </subcellularLocation>
</comment>
<comment type="subcellular location">
    <molecule>Glycoprotein G1</molecule>
    <subcellularLocation>
        <location evidence="2">Virion membrane</location>
        <topology evidence="2">Peripheral membrane protein</topology>
    </subcellularLocation>
    <subcellularLocation>
        <location evidence="2">Host endoplasmic reticulum membrane</location>
        <topology evidence="2">Peripheral membrane protein</topology>
    </subcellularLocation>
    <subcellularLocation>
        <location evidence="2">Host Golgi apparatus membrane</location>
        <topology evidence="2">Peripheral membrane protein</topology>
    </subcellularLocation>
    <subcellularLocation>
        <location evidence="2">Host cell membrane</location>
        <topology evidence="2">Peripheral membrane protein</topology>
    </subcellularLocation>
</comment>
<comment type="subcellular location">
    <molecule>Glycoprotein G2</molecule>
    <subcellularLocation>
        <location evidence="2">Virion membrane</location>
        <topology evidence="2">Single-pass membrane protein</topology>
    </subcellularLocation>
    <subcellularLocation>
        <location evidence="2">Host endoplasmic reticulum membrane</location>
        <topology evidence="2">Single-pass membrane protein</topology>
    </subcellularLocation>
    <subcellularLocation>
        <location evidence="2">Host Golgi apparatus membrane</location>
        <topology evidence="2">Single-pass membrane protein</topology>
    </subcellularLocation>
    <subcellularLocation>
        <location evidence="2">Host cell membrane</location>
        <topology evidence="2">Single-pass membrane protein</topology>
    </subcellularLocation>
    <text evidence="2">Binding to the stable signal peptide masks endogenous ER localization signals in the cytoplasmic domain of G2 to ensure that only the fully assembled, tripartite GP complex is transported for virion assembly.</text>
</comment>
<comment type="domain">
    <molecule>Stable signal peptide</molecule>
    <text evidence="2">The N-terminus is localized at the extracellular side of the GP-C, with a part embedded in the membrane probably.</text>
</comment>
<comment type="domain">
    <molecule>Glycoprotein G2</molecule>
    <text evidence="2">Contains 1 fusion peptide at the N-terminus, 2 heptad repeats domains HR1 and HR2 and, at the C-terminus, a cytoplasmic domain that plays a role in ER location. Also contains a zinc-binding domain that allows SSP retention in the GPC complex by accepting a cysteine from SSP as the fourth ligand.</text>
</comment>
<comment type="PTM">
    <molecule>Pre-glycoprotein polyprotein GP complex</molecule>
    <text evidence="2">Specific enzymatic cleavages in vivo yield mature proteins. GP-C polyprotein is cleaved in the endoplasmic reticulum by the host protease MBTPS1. Only cleaved glycoprotein is incorporated into virions.</text>
</comment>
<comment type="PTM">
    <molecule>Stable signal peptide</molecule>
    <text evidence="2">The SSP remains stably associated with the GP complex following cleavage by signal peptidase and plays crucial roles in the trafficking of GP through the secretory pathway.</text>
</comment>
<comment type="PTM">
    <molecule>Stable signal peptide</molecule>
    <text evidence="2">Myristoylation is necessary for GP2-mediated fusion activity.</text>
</comment>
<comment type="similarity">
    <text evidence="2">Belongs to the arenaviridae GPC protein family.</text>
</comment>
<gene>
    <name evidence="2" type="primary">GPC</name>
    <name type="synonym">GP-C</name>
</gene>
<name>GLYC_IPPYV</name>
<organismHost>
    <name type="scientific">Praomys</name>
    <name type="common">African soft-furred rats</name>
    <dbReference type="NCBI Taxonomy" id="10111"/>
</organismHost>
<protein>
    <recommendedName>
        <fullName evidence="2">Pre-glycoprotein polyprotein GP complex</fullName>
        <shortName evidence="2">Pre-GP-C</shortName>
    </recommendedName>
    <component>
        <recommendedName>
            <fullName evidence="2">Stable signal peptide</fullName>
            <shortName evidence="2">SSP</shortName>
        </recommendedName>
    </component>
    <component>
        <recommendedName>
            <fullName evidence="2">Glycoprotein G1</fullName>
            <shortName evidence="2">GP1</shortName>
        </recommendedName>
    </component>
    <component>
        <recommendedName>
            <fullName evidence="2">Glycoprotein G2</fullName>
            <shortName evidence="2">GP2</shortName>
        </recommendedName>
    </component>
</protein>
<dbReference type="EMBL" id="DQ328877">
    <property type="protein sequence ID" value="ABC71140.1"/>
    <property type="molecule type" value="Genomic_RNA"/>
</dbReference>
<dbReference type="RefSeq" id="YP_516230.1">
    <property type="nucleotide sequence ID" value="NC_007905.1"/>
</dbReference>
<dbReference type="SMR" id="Q27YE4"/>
<dbReference type="GlyCosmos" id="Q27YE4">
    <property type="glycosylation" value="14 sites, No reported glycans"/>
</dbReference>
<dbReference type="GeneID" id="3953117"/>
<dbReference type="KEGG" id="vg:3953117"/>
<dbReference type="OrthoDB" id="4838at10239"/>
<dbReference type="Proteomes" id="UP000009261">
    <property type="component" value="Genome"/>
</dbReference>
<dbReference type="GO" id="GO:0044167">
    <property type="term" value="C:host cell endoplasmic reticulum membrane"/>
    <property type="evidence" value="ECO:0007669"/>
    <property type="project" value="UniProtKB-SubCell"/>
</dbReference>
<dbReference type="GO" id="GO:0044178">
    <property type="term" value="C:host cell Golgi membrane"/>
    <property type="evidence" value="ECO:0007669"/>
    <property type="project" value="UniProtKB-SubCell"/>
</dbReference>
<dbReference type="GO" id="GO:0020002">
    <property type="term" value="C:host cell plasma membrane"/>
    <property type="evidence" value="ECO:0007669"/>
    <property type="project" value="UniProtKB-SubCell"/>
</dbReference>
<dbReference type="GO" id="GO:0016020">
    <property type="term" value="C:membrane"/>
    <property type="evidence" value="ECO:0007669"/>
    <property type="project" value="UniProtKB-UniRule"/>
</dbReference>
<dbReference type="GO" id="GO:0019031">
    <property type="term" value="C:viral envelope"/>
    <property type="evidence" value="ECO:0007669"/>
    <property type="project" value="UniProtKB-UniRule"/>
</dbReference>
<dbReference type="GO" id="GO:0055036">
    <property type="term" value="C:virion membrane"/>
    <property type="evidence" value="ECO:0007669"/>
    <property type="project" value="UniProtKB-SubCell"/>
</dbReference>
<dbReference type="GO" id="GO:0046872">
    <property type="term" value="F:metal ion binding"/>
    <property type="evidence" value="ECO:0007669"/>
    <property type="project" value="UniProtKB-KW"/>
</dbReference>
<dbReference type="GO" id="GO:0039654">
    <property type="term" value="P:fusion of virus membrane with host endosome membrane"/>
    <property type="evidence" value="ECO:0007669"/>
    <property type="project" value="UniProtKB-UniRule"/>
</dbReference>
<dbReference type="GO" id="GO:0019065">
    <property type="term" value="P:receptor-mediated endocytosis of virus by host cell"/>
    <property type="evidence" value="ECO:0007669"/>
    <property type="project" value="UniProtKB-UniRule"/>
</dbReference>
<dbReference type="GO" id="GO:0019062">
    <property type="term" value="P:virion attachment to host cell"/>
    <property type="evidence" value="ECO:0007669"/>
    <property type="project" value="UniProtKB-UniRule"/>
</dbReference>
<dbReference type="Gene3D" id="6.10.140.1590">
    <property type="match status" value="1"/>
</dbReference>
<dbReference type="Gene3D" id="2.20.28.180">
    <property type="entry name" value="Arenavirus glycoprotein, zinc binding domain"/>
    <property type="match status" value="1"/>
</dbReference>
<dbReference type="HAMAP" id="MF_04084">
    <property type="entry name" value="ARENA_GPC"/>
    <property type="match status" value="1"/>
</dbReference>
<dbReference type="InterPro" id="IPR001535">
    <property type="entry name" value="Arena_glycoprot"/>
</dbReference>
<dbReference type="InterPro" id="IPR043015">
    <property type="entry name" value="Arena_glycoprot_zinc-bd"/>
</dbReference>
<dbReference type="Pfam" id="PF00798">
    <property type="entry name" value="Arena_glycoprot"/>
    <property type="match status" value="1"/>
</dbReference>
<dbReference type="PIRSF" id="PIRSF004028">
    <property type="entry name" value="GPC_ArenaV"/>
    <property type="match status" value="1"/>
</dbReference>
<keyword id="KW-1015">Disulfide bond</keyword>
<keyword id="KW-1170">Fusion of virus membrane with host endosomal membrane</keyword>
<keyword id="KW-1168">Fusion of virus membrane with host membrane</keyword>
<keyword id="KW-0325">Glycoprotein</keyword>
<keyword id="KW-1032">Host cell membrane</keyword>
<keyword id="KW-1038">Host endoplasmic reticulum</keyword>
<keyword id="KW-1040">Host Golgi apparatus</keyword>
<keyword id="KW-1043">Host membrane</keyword>
<keyword id="KW-0945">Host-virus interaction</keyword>
<keyword id="KW-0449">Lipoprotein</keyword>
<keyword id="KW-0472">Membrane</keyword>
<keyword id="KW-0479">Metal-binding</keyword>
<keyword id="KW-0519">Myristate</keyword>
<keyword id="KW-0812">Transmembrane</keyword>
<keyword id="KW-1133">Transmembrane helix</keyword>
<keyword id="KW-1161">Viral attachment to host cell</keyword>
<keyword id="KW-0261">Viral envelope protein</keyword>
<keyword id="KW-1162">Viral penetration into host cytoplasm</keyword>
<keyword id="KW-0946">Virion</keyword>
<keyword id="KW-1164">Virus endocytosis by host</keyword>
<keyword id="KW-1160">Virus entry into host cell</keyword>
<keyword id="KW-0862">Zinc</keyword>
<sequence>MGQIITFFQEVPHIIEEVMNIVLITLSLLAILKGVYNVMTCGLIGLISFLLLCGKSCSLIYKDTYNFSSIELDLSHLNMTLPMSCSRNNSHHYVFFNGSGLEMTFTNDSLLNHKFCNLSDAHKKNLYDHALMGIVTTFHLSIPNFNQYEAMACDFNGGNISIQYNLSHNDRTDAMNHCGTVANGVLDAFYRFHWGRNITYIAQLPNGDGTGRWTFCYATSYKYLVIQNISWADHCQMSRPTPIGFASILSQRIRSIYISRRLMSTFTWSLSDSSGTENPGGYCLTRWMLFAADLKCFGNTAIAKCNLNHDEEFCDMLRLIDFNKQALKTFKSEVNHGLQLITKAINALINDQLIMKNHLRDLMGIPYCNYSKFWYLNDTRTGRVSLPKCWMISNGTYLNETHFSDEIEQEADNMITEMLRKEYQERQGKTPLGLVDLFIFSTSFYSITVFLHLIKIPTHRHIVGQGCPKPHRLNSRAICSCGAYKQPGLPTKWKR</sequence>
<evidence type="ECO:0000250" key="1">
    <source>
        <dbReference type="UniProtKB" id="P26313"/>
    </source>
</evidence>
<evidence type="ECO:0000255" key="2">
    <source>
        <dbReference type="HAMAP-Rule" id="MF_04084"/>
    </source>
</evidence>
<evidence type="ECO:0000269" key="3">
    <source>
    </source>
</evidence>
<proteinExistence type="evidence at protein level"/>